<protein>
    <recommendedName>
        <fullName>Cuticle collagen 13</fullName>
    </recommendedName>
</protein>
<feature type="signal peptide" evidence="1">
    <location>
        <begin position="1"/>
        <end position="36"/>
    </location>
</feature>
<feature type="chain" id="PRO_0000006425" description="Cuticle collagen 13">
    <location>
        <begin position="37"/>
        <end position="316"/>
    </location>
</feature>
<feature type="region of interest" description="Disordered" evidence="2">
    <location>
        <begin position="127"/>
        <end position="316"/>
    </location>
</feature>
<feature type="region of interest" description="Triple-helical region">
    <location>
        <begin position="128"/>
        <end position="157"/>
    </location>
</feature>
<feature type="region of interest" description="Triple-helical region">
    <location>
        <begin position="176"/>
        <end position="202"/>
    </location>
</feature>
<feature type="region of interest" description="Triple-helical region">
    <location>
        <begin position="206"/>
        <end position="235"/>
    </location>
</feature>
<feature type="region of interest" description="Triple-helical region">
    <location>
        <begin position="240"/>
        <end position="266"/>
    </location>
</feature>
<feature type="region of interest" description="Triple-helical region">
    <location>
        <begin position="269"/>
        <end position="304"/>
    </location>
</feature>
<feature type="compositionally biased region" description="Low complexity" evidence="2">
    <location>
        <begin position="127"/>
        <end position="157"/>
    </location>
</feature>
<feature type="compositionally biased region" description="Low complexity" evidence="2">
    <location>
        <begin position="183"/>
        <end position="204"/>
    </location>
</feature>
<feature type="compositionally biased region" description="Pro residues" evidence="2">
    <location>
        <begin position="205"/>
        <end position="217"/>
    </location>
</feature>
<feature type="compositionally biased region" description="Low complexity" evidence="2">
    <location>
        <begin position="219"/>
        <end position="234"/>
    </location>
</feature>
<feature type="compositionally biased region" description="Pro residues" evidence="2">
    <location>
        <begin position="241"/>
        <end position="251"/>
    </location>
</feature>
<feature type="compositionally biased region" description="Low complexity" evidence="2">
    <location>
        <begin position="256"/>
        <end position="266"/>
    </location>
</feature>
<feature type="compositionally biased region" description="Low complexity" evidence="2">
    <location>
        <begin position="276"/>
        <end position="295"/>
    </location>
</feature>
<feature type="compositionally biased region" description="Pro residues" evidence="2">
    <location>
        <begin position="307"/>
        <end position="316"/>
    </location>
</feature>
<dbReference type="EMBL" id="X51623">
    <property type="protein sequence ID" value="CAA35955.1"/>
    <property type="molecule type" value="Genomic_DNA"/>
</dbReference>
<dbReference type="EMBL" id="Z73972">
    <property type="protein sequence ID" value="CAA98258.1"/>
    <property type="molecule type" value="Genomic_DNA"/>
</dbReference>
<dbReference type="PIR" id="S08170">
    <property type="entry name" value="S08170"/>
</dbReference>
<dbReference type="RefSeq" id="NP_505677.1">
    <property type="nucleotide sequence ID" value="NM_073276.3"/>
</dbReference>
<dbReference type="SMR" id="P20631"/>
<dbReference type="FunCoup" id="P20631">
    <property type="interactions" value="19"/>
</dbReference>
<dbReference type="STRING" id="6239.F15H10.2.1"/>
<dbReference type="PaxDb" id="6239-F15H10.2"/>
<dbReference type="EnsemblMetazoa" id="F15H10.2.1">
    <property type="protein sequence ID" value="F15H10.2.1"/>
    <property type="gene ID" value="WBGene00000602"/>
</dbReference>
<dbReference type="GeneID" id="179452"/>
<dbReference type="KEGG" id="cel:CELE_F15H10.2"/>
<dbReference type="UCSC" id="F15H10.2">
    <property type="organism name" value="c. elegans"/>
</dbReference>
<dbReference type="AGR" id="WB:WBGene00000602"/>
<dbReference type="CTD" id="179452"/>
<dbReference type="WormBase" id="F15H10.2">
    <property type="protein sequence ID" value="CE05639"/>
    <property type="gene ID" value="WBGene00000602"/>
    <property type="gene designation" value="col-13"/>
</dbReference>
<dbReference type="eggNOG" id="KOG3544">
    <property type="taxonomic scope" value="Eukaryota"/>
</dbReference>
<dbReference type="GeneTree" id="ENSGT00940000168256"/>
<dbReference type="HOGENOM" id="CLU_001074_4_2_1"/>
<dbReference type="InParanoid" id="P20631"/>
<dbReference type="OMA" id="XPPPRTA"/>
<dbReference type="OrthoDB" id="5870983at2759"/>
<dbReference type="PhylomeDB" id="P20631"/>
<dbReference type="PRO" id="PR:P20631"/>
<dbReference type="Proteomes" id="UP000001940">
    <property type="component" value="Chromosome V"/>
</dbReference>
<dbReference type="Bgee" id="WBGene00000602">
    <property type="expression patterns" value="Expressed in larva and 2 other cell types or tissues"/>
</dbReference>
<dbReference type="GO" id="GO:0005581">
    <property type="term" value="C:collagen trimer"/>
    <property type="evidence" value="ECO:0007669"/>
    <property type="project" value="UniProtKB-KW"/>
</dbReference>
<dbReference type="GO" id="GO:0042302">
    <property type="term" value="F:structural constituent of cuticle"/>
    <property type="evidence" value="ECO:0007669"/>
    <property type="project" value="UniProtKB-KW"/>
</dbReference>
<dbReference type="InterPro" id="IPR002486">
    <property type="entry name" value="Col_cuticle_N"/>
</dbReference>
<dbReference type="InterPro" id="IPR008160">
    <property type="entry name" value="Collagen"/>
</dbReference>
<dbReference type="PANTHER" id="PTHR24637">
    <property type="entry name" value="COLLAGEN"/>
    <property type="match status" value="1"/>
</dbReference>
<dbReference type="PANTHER" id="PTHR24637:SF267">
    <property type="entry name" value="CUTICLE COLLAGEN 12-RELATED"/>
    <property type="match status" value="1"/>
</dbReference>
<dbReference type="Pfam" id="PF01484">
    <property type="entry name" value="Col_cuticle_N"/>
    <property type="match status" value="1"/>
</dbReference>
<dbReference type="Pfam" id="PF01391">
    <property type="entry name" value="Collagen"/>
    <property type="match status" value="2"/>
</dbReference>
<dbReference type="SMART" id="SM01088">
    <property type="entry name" value="Col_cuticle_N"/>
    <property type="match status" value="1"/>
</dbReference>
<name>COL13_CAEEL</name>
<proteinExistence type="inferred from homology"/>
<gene>
    <name type="primary">col-13</name>
    <name type="ORF">F15H10.2</name>
</gene>
<evidence type="ECO:0000255" key="1"/>
<evidence type="ECO:0000256" key="2">
    <source>
        <dbReference type="SAM" id="MobiDB-lite"/>
    </source>
</evidence>
<evidence type="ECO:0000305" key="3"/>
<sequence length="316" mass="30100">MSEDLKQIAQETESLRKVAFFGIAVSTIATLTAIIAVPMLYNYMQHVQSSLQSEVEFCQHRSNGLWDEYKRFQGVSGVEGRIKRDAYHRSLGVSGASRKARRQSYGNDAAVGGFGGSSGGSCCSCGSGAAGPAGSPGQDGAPGNDGAPGAPGNPGQDASEDQTAGPDSFCFDCPAGPPGPSGAPGQKGPSGAPGAPGQSGGAALPGPPGPAGPPGPAGQPGSNGNAGAPGAPGQVVDVPGTPGPAGPPGSPGPAGAPGQPGQAGSSQPGGPGPQGDAGAPGAPGAPGQAGAPGQDGESGSEGACDHCPPPRTAPGY</sequence>
<organism>
    <name type="scientific">Caenorhabditis elegans</name>
    <dbReference type="NCBI Taxonomy" id="6239"/>
    <lineage>
        <taxon>Eukaryota</taxon>
        <taxon>Metazoa</taxon>
        <taxon>Ecdysozoa</taxon>
        <taxon>Nematoda</taxon>
        <taxon>Chromadorea</taxon>
        <taxon>Rhabditida</taxon>
        <taxon>Rhabditina</taxon>
        <taxon>Rhabditomorpha</taxon>
        <taxon>Rhabditoidea</taxon>
        <taxon>Rhabditidae</taxon>
        <taxon>Peloderinae</taxon>
        <taxon>Caenorhabditis</taxon>
    </lineage>
</organism>
<keyword id="KW-0176">Collagen</keyword>
<keyword id="KW-0193">Cuticle</keyword>
<keyword id="KW-1015">Disulfide bond</keyword>
<keyword id="KW-1185">Reference proteome</keyword>
<keyword id="KW-0677">Repeat</keyword>
<keyword id="KW-0732">Signal</keyword>
<accession>P20631</accession>
<comment type="function">
    <text>Nematode cuticles are composed largely of collagen-like proteins. The cuticle functions both as an exoskeleton and as a barrier to protect the worm from its environment.</text>
</comment>
<comment type="subunit">
    <text>Collagen polypeptide chains are complexed within the cuticle by disulfide bonds and other types of covalent cross-links.</text>
</comment>
<comment type="similarity">
    <text evidence="3">Belongs to the cuticular collagen family.</text>
</comment>
<reference key="1">
    <citation type="journal article" date="1990" name="J. Mol. Biol.">
        <title>Tandemly duplicated Caenorhabditis elegans collagen genes differ in their modes of splicing.</title>
        <authorList>
            <person name="Park Y.-S."/>
            <person name="Kramer J.M."/>
        </authorList>
    </citation>
    <scope>NUCLEOTIDE SEQUENCE [GENOMIC DNA]</scope>
    <source>
        <strain>Bristol N2</strain>
    </source>
</reference>
<reference key="2">
    <citation type="journal article" date="1998" name="Science">
        <title>Genome sequence of the nematode C. elegans: a platform for investigating biology.</title>
        <authorList>
            <consortium name="The C. elegans sequencing consortium"/>
        </authorList>
    </citation>
    <scope>NUCLEOTIDE SEQUENCE [LARGE SCALE GENOMIC DNA]</scope>
    <source>
        <strain>Bristol N2</strain>
    </source>
</reference>